<dbReference type="EMBL" id="AE001273">
    <property type="protein sequence ID" value="AAC67911.1"/>
    <property type="molecule type" value="Genomic_DNA"/>
</dbReference>
<dbReference type="PIR" id="C71530">
    <property type="entry name" value="C71530"/>
</dbReference>
<dbReference type="RefSeq" id="NP_219823.1">
    <property type="nucleotide sequence ID" value="NC_000117.1"/>
</dbReference>
<dbReference type="RefSeq" id="WP_009871665.1">
    <property type="nucleotide sequence ID" value="NC_000117.1"/>
</dbReference>
<dbReference type="SMR" id="O84320"/>
<dbReference type="FunCoup" id="O84320">
    <property type="interactions" value="297"/>
</dbReference>
<dbReference type="STRING" id="272561.CT_318"/>
<dbReference type="EnsemblBacteria" id="AAC67911">
    <property type="protein sequence ID" value="AAC67911"/>
    <property type="gene ID" value="CT_318"/>
</dbReference>
<dbReference type="GeneID" id="884805"/>
<dbReference type="KEGG" id="ctr:CT_318"/>
<dbReference type="PATRIC" id="fig|272561.5.peg.340"/>
<dbReference type="HOGENOM" id="CLU_062853_0_0_0"/>
<dbReference type="InParanoid" id="O84320"/>
<dbReference type="OrthoDB" id="9803740at2"/>
<dbReference type="Proteomes" id="UP000000431">
    <property type="component" value="Chromosome"/>
</dbReference>
<dbReference type="GO" id="GO:0015934">
    <property type="term" value="C:large ribosomal subunit"/>
    <property type="evidence" value="ECO:0007669"/>
    <property type="project" value="InterPro"/>
</dbReference>
<dbReference type="GO" id="GO:0019843">
    <property type="term" value="F:rRNA binding"/>
    <property type="evidence" value="ECO:0007669"/>
    <property type="project" value="UniProtKB-UniRule"/>
</dbReference>
<dbReference type="GO" id="GO:0003735">
    <property type="term" value="F:structural constituent of ribosome"/>
    <property type="evidence" value="ECO:0007669"/>
    <property type="project" value="InterPro"/>
</dbReference>
<dbReference type="GO" id="GO:0000049">
    <property type="term" value="F:tRNA binding"/>
    <property type="evidence" value="ECO:0007669"/>
    <property type="project" value="UniProtKB-KW"/>
</dbReference>
<dbReference type="GO" id="GO:0006417">
    <property type="term" value="P:regulation of translation"/>
    <property type="evidence" value="ECO:0007669"/>
    <property type="project" value="UniProtKB-KW"/>
</dbReference>
<dbReference type="GO" id="GO:0006412">
    <property type="term" value="P:translation"/>
    <property type="evidence" value="ECO:0007669"/>
    <property type="project" value="UniProtKB-UniRule"/>
</dbReference>
<dbReference type="CDD" id="cd00403">
    <property type="entry name" value="Ribosomal_L1"/>
    <property type="match status" value="1"/>
</dbReference>
<dbReference type="FunFam" id="3.40.50.790:FF:000001">
    <property type="entry name" value="50S ribosomal protein L1"/>
    <property type="match status" value="1"/>
</dbReference>
<dbReference type="Gene3D" id="3.30.190.20">
    <property type="match status" value="1"/>
</dbReference>
<dbReference type="Gene3D" id="3.40.50.790">
    <property type="match status" value="1"/>
</dbReference>
<dbReference type="HAMAP" id="MF_01318_B">
    <property type="entry name" value="Ribosomal_uL1_B"/>
    <property type="match status" value="1"/>
</dbReference>
<dbReference type="InterPro" id="IPR005878">
    <property type="entry name" value="Ribosom_uL1_bac-type"/>
</dbReference>
<dbReference type="InterPro" id="IPR002143">
    <property type="entry name" value="Ribosomal_uL1"/>
</dbReference>
<dbReference type="InterPro" id="IPR023674">
    <property type="entry name" value="Ribosomal_uL1-like"/>
</dbReference>
<dbReference type="InterPro" id="IPR028364">
    <property type="entry name" value="Ribosomal_uL1/biogenesis"/>
</dbReference>
<dbReference type="InterPro" id="IPR016095">
    <property type="entry name" value="Ribosomal_uL1_3-a/b-sand"/>
</dbReference>
<dbReference type="InterPro" id="IPR023673">
    <property type="entry name" value="Ribosomal_uL1_CS"/>
</dbReference>
<dbReference type="NCBIfam" id="TIGR01169">
    <property type="entry name" value="rplA_bact"/>
    <property type="match status" value="1"/>
</dbReference>
<dbReference type="PANTHER" id="PTHR36427">
    <property type="entry name" value="54S RIBOSOMAL PROTEIN L1, MITOCHONDRIAL"/>
    <property type="match status" value="1"/>
</dbReference>
<dbReference type="PANTHER" id="PTHR36427:SF3">
    <property type="entry name" value="LARGE RIBOSOMAL SUBUNIT PROTEIN UL1M"/>
    <property type="match status" value="1"/>
</dbReference>
<dbReference type="Pfam" id="PF00687">
    <property type="entry name" value="Ribosomal_L1"/>
    <property type="match status" value="1"/>
</dbReference>
<dbReference type="PIRSF" id="PIRSF002155">
    <property type="entry name" value="Ribosomal_L1"/>
    <property type="match status" value="1"/>
</dbReference>
<dbReference type="SUPFAM" id="SSF56808">
    <property type="entry name" value="Ribosomal protein L1"/>
    <property type="match status" value="1"/>
</dbReference>
<dbReference type="PROSITE" id="PS01199">
    <property type="entry name" value="RIBOSOMAL_L1"/>
    <property type="match status" value="1"/>
</dbReference>
<reference key="1">
    <citation type="journal article" date="1998" name="Science">
        <title>Genome sequence of an obligate intracellular pathogen of humans: Chlamydia trachomatis.</title>
        <authorList>
            <person name="Stephens R.S."/>
            <person name="Kalman S."/>
            <person name="Lammel C.J."/>
            <person name="Fan J."/>
            <person name="Marathe R."/>
            <person name="Aravind L."/>
            <person name="Mitchell W.P."/>
            <person name="Olinger L."/>
            <person name="Tatusov R.L."/>
            <person name="Zhao Q."/>
            <person name="Koonin E.V."/>
            <person name="Davis R.W."/>
        </authorList>
    </citation>
    <scope>NUCLEOTIDE SEQUENCE [LARGE SCALE GENOMIC DNA]</scope>
    <source>
        <strain>ATCC VR-885 / DSM 19411 / UW-3/Cx</strain>
    </source>
</reference>
<protein>
    <recommendedName>
        <fullName evidence="1">Large ribosomal subunit protein uL1</fullName>
    </recommendedName>
    <alternativeName>
        <fullName evidence="2">50S ribosomal protein L1</fullName>
    </alternativeName>
</protein>
<organism>
    <name type="scientific">Chlamydia trachomatis serovar D (strain ATCC VR-885 / DSM 19411 / UW-3/Cx)</name>
    <dbReference type="NCBI Taxonomy" id="272561"/>
    <lineage>
        <taxon>Bacteria</taxon>
        <taxon>Pseudomonadati</taxon>
        <taxon>Chlamydiota</taxon>
        <taxon>Chlamydiia</taxon>
        <taxon>Chlamydiales</taxon>
        <taxon>Chlamydiaceae</taxon>
        <taxon>Chlamydia/Chlamydophila group</taxon>
        <taxon>Chlamydia</taxon>
    </lineage>
</organism>
<proteinExistence type="inferred from homology"/>
<sequence>MTKHGKRIRGIQETYDLAKSYSLGEAIDILKQCPTVRFDQTVDVSVKLGIDPRKSDQQIRGSVSLPHGTGKVLRILVFAAGDKAAEAIEAGADFVGSDDLVEKIKGGWVDFDVAVATPDMMREVGKLGKVLGPRNLMPTPKAGTVTTDVVKTVAELRKGKIEFKADRAGVCNVGVAKLSFDSAQIKENVEALCAALVKAKPATAKGQYLVNFTISSTMGPGVTVDTRELIAL</sequence>
<gene>
    <name evidence="1" type="primary">rplA</name>
    <name type="synonym">rl1</name>
    <name type="ordered locus">CT_318</name>
</gene>
<feature type="chain" id="PRO_0000125642" description="Large ribosomal subunit protein uL1">
    <location>
        <begin position="1"/>
        <end position="232"/>
    </location>
</feature>
<accession>O84320</accession>
<name>RL1_CHLTR</name>
<keyword id="KW-1185">Reference proteome</keyword>
<keyword id="KW-0678">Repressor</keyword>
<keyword id="KW-0687">Ribonucleoprotein</keyword>
<keyword id="KW-0689">Ribosomal protein</keyword>
<keyword id="KW-0694">RNA-binding</keyword>
<keyword id="KW-0699">rRNA-binding</keyword>
<keyword id="KW-0810">Translation regulation</keyword>
<keyword id="KW-0820">tRNA-binding</keyword>
<comment type="function">
    <text evidence="1">Binds directly to 23S rRNA. The L1 stalk is quite mobile in the ribosome, and is involved in E site tRNA release.</text>
</comment>
<comment type="function">
    <text evidence="1">Protein L1 is also a translational repressor protein, it controls the translation of the L11 operon by binding to its mRNA.</text>
</comment>
<comment type="subunit">
    <text evidence="1">Part of the 50S ribosomal subunit.</text>
</comment>
<comment type="similarity">
    <text evidence="1">Belongs to the universal ribosomal protein uL1 family.</text>
</comment>
<evidence type="ECO:0000255" key="1">
    <source>
        <dbReference type="HAMAP-Rule" id="MF_01318"/>
    </source>
</evidence>
<evidence type="ECO:0000305" key="2"/>